<name>END4_ECOUT</name>
<organism>
    <name type="scientific">Escherichia coli (strain UTI89 / UPEC)</name>
    <dbReference type="NCBI Taxonomy" id="364106"/>
    <lineage>
        <taxon>Bacteria</taxon>
        <taxon>Pseudomonadati</taxon>
        <taxon>Pseudomonadota</taxon>
        <taxon>Gammaproteobacteria</taxon>
        <taxon>Enterobacterales</taxon>
        <taxon>Enterobacteriaceae</taxon>
        <taxon>Escherichia</taxon>
    </lineage>
</organism>
<feature type="chain" id="PRO_1000011305" description="Probable endonuclease 4">
    <location>
        <begin position="1"/>
        <end position="285"/>
    </location>
</feature>
<feature type="binding site" evidence="1">
    <location>
        <position position="69"/>
    </location>
    <ligand>
        <name>Zn(2+)</name>
        <dbReference type="ChEBI" id="CHEBI:29105"/>
        <label>1</label>
    </ligand>
</feature>
<feature type="binding site" evidence="1">
    <location>
        <position position="109"/>
    </location>
    <ligand>
        <name>Zn(2+)</name>
        <dbReference type="ChEBI" id="CHEBI:29105"/>
        <label>1</label>
    </ligand>
</feature>
<feature type="binding site" evidence="1">
    <location>
        <position position="145"/>
    </location>
    <ligand>
        <name>Zn(2+)</name>
        <dbReference type="ChEBI" id="CHEBI:29105"/>
        <label>1</label>
    </ligand>
</feature>
<feature type="binding site" evidence="1">
    <location>
        <position position="145"/>
    </location>
    <ligand>
        <name>Zn(2+)</name>
        <dbReference type="ChEBI" id="CHEBI:29105"/>
        <label>2</label>
    </ligand>
</feature>
<feature type="binding site" evidence="1">
    <location>
        <position position="179"/>
    </location>
    <ligand>
        <name>Zn(2+)</name>
        <dbReference type="ChEBI" id="CHEBI:29105"/>
        <label>2</label>
    </ligand>
</feature>
<feature type="binding site" evidence="1">
    <location>
        <position position="182"/>
    </location>
    <ligand>
        <name>Zn(2+)</name>
        <dbReference type="ChEBI" id="CHEBI:29105"/>
        <label>3</label>
    </ligand>
</feature>
<feature type="binding site" evidence="1">
    <location>
        <position position="216"/>
    </location>
    <ligand>
        <name>Zn(2+)</name>
        <dbReference type="ChEBI" id="CHEBI:29105"/>
        <label>2</label>
    </ligand>
</feature>
<feature type="binding site" evidence="1">
    <location>
        <position position="229"/>
    </location>
    <ligand>
        <name>Zn(2+)</name>
        <dbReference type="ChEBI" id="CHEBI:29105"/>
        <label>3</label>
    </ligand>
</feature>
<feature type="binding site" evidence="1">
    <location>
        <position position="231"/>
    </location>
    <ligand>
        <name>Zn(2+)</name>
        <dbReference type="ChEBI" id="CHEBI:29105"/>
        <label>3</label>
    </ligand>
</feature>
<feature type="binding site" evidence="1">
    <location>
        <position position="261"/>
    </location>
    <ligand>
        <name>Zn(2+)</name>
        <dbReference type="ChEBI" id="CHEBI:29105"/>
        <label>2</label>
    </ligand>
</feature>
<accession>Q1R9R2</accession>
<gene>
    <name evidence="1" type="primary">nfo</name>
    <name type="ordered locus">UTI89_C2434</name>
</gene>
<dbReference type="EC" id="3.1.21.2" evidence="1"/>
<dbReference type="EMBL" id="CP000243">
    <property type="protein sequence ID" value="ABE07902.1"/>
    <property type="molecule type" value="Genomic_DNA"/>
</dbReference>
<dbReference type="RefSeq" id="WP_000873879.1">
    <property type="nucleotide sequence ID" value="NZ_CP064825.1"/>
</dbReference>
<dbReference type="SMR" id="Q1R9R2"/>
<dbReference type="KEGG" id="eci:UTI89_C2434"/>
<dbReference type="HOGENOM" id="CLU_025885_0_4_6"/>
<dbReference type="Proteomes" id="UP000001952">
    <property type="component" value="Chromosome"/>
</dbReference>
<dbReference type="GO" id="GO:0008833">
    <property type="term" value="F:deoxyribonuclease IV (phage-T4-induced) activity"/>
    <property type="evidence" value="ECO:0007669"/>
    <property type="project" value="UniProtKB-UniRule"/>
</dbReference>
<dbReference type="GO" id="GO:0003677">
    <property type="term" value="F:DNA binding"/>
    <property type="evidence" value="ECO:0007669"/>
    <property type="project" value="InterPro"/>
</dbReference>
<dbReference type="GO" id="GO:0003906">
    <property type="term" value="F:DNA-(apurinic or apyrimidinic site) endonuclease activity"/>
    <property type="evidence" value="ECO:0007669"/>
    <property type="project" value="TreeGrafter"/>
</dbReference>
<dbReference type="GO" id="GO:0008081">
    <property type="term" value="F:phosphoric diester hydrolase activity"/>
    <property type="evidence" value="ECO:0007669"/>
    <property type="project" value="TreeGrafter"/>
</dbReference>
<dbReference type="GO" id="GO:0008270">
    <property type="term" value="F:zinc ion binding"/>
    <property type="evidence" value="ECO:0007669"/>
    <property type="project" value="UniProtKB-UniRule"/>
</dbReference>
<dbReference type="GO" id="GO:0006284">
    <property type="term" value="P:base-excision repair"/>
    <property type="evidence" value="ECO:0007669"/>
    <property type="project" value="TreeGrafter"/>
</dbReference>
<dbReference type="CDD" id="cd00019">
    <property type="entry name" value="AP2Ec"/>
    <property type="match status" value="1"/>
</dbReference>
<dbReference type="FunFam" id="3.20.20.150:FF:000001">
    <property type="entry name" value="Probable endonuclease 4"/>
    <property type="match status" value="1"/>
</dbReference>
<dbReference type="Gene3D" id="3.20.20.150">
    <property type="entry name" value="Divalent-metal-dependent TIM barrel enzymes"/>
    <property type="match status" value="1"/>
</dbReference>
<dbReference type="HAMAP" id="MF_00152">
    <property type="entry name" value="Nfo"/>
    <property type="match status" value="1"/>
</dbReference>
<dbReference type="InterPro" id="IPR001719">
    <property type="entry name" value="AP_endonuc_2"/>
</dbReference>
<dbReference type="InterPro" id="IPR018246">
    <property type="entry name" value="AP_endonuc_F2_Zn_BS"/>
</dbReference>
<dbReference type="InterPro" id="IPR036237">
    <property type="entry name" value="Xyl_isomerase-like_sf"/>
</dbReference>
<dbReference type="InterPro" id="IPR013022">
    <property type="entry name" value="Xyl_isomerase-like_TIM-brl"/>
</dbReference>
<dbReference type="NCBIfam" id="TIGR00587">
    <property type="entry name" value="nfo"/>
    <property type="match status" value="1"/>
</dbReference>
<dbReference type="NCBIfam" id="NF002199">
    <property type="entry name" value="PRK01060.1-4"/>
    <property type="match status" value="1"/>
</dbReference>
<dbReference type="PANTHER" id="PTHR21445:SF0">
    <property type="entry name" value="APURINIC-APYRIMIDINIC ENDONUCLEASE"/>
    <property type="match status" value="1"/>
</dbReference>
<dbReference type="PANTHER" id="PTHR21445">
    <property type="entry name" value="ENDONUCLEASE IV ENDODEOXYRIBONUCLEASE IV"/>
    <property type="match status" value="1"/>
</dbReference>
<dbReference type="Pfam" id="PF01261">
    <property type="entry name" value="AP_endonuc_2"/>
    <property type="match status" value="1"/>
</dbReference>
<dbReference type="SMART" id="SM00518">
    <property type="entry name" value="AP2Ec"/>
    <property type="match status" value="1"/>
</dbReference>
<dbReference type="SUPFAM" id="SSF51658">
    <property type="entry name" value="Xylose isomerase-like"/>
    <property type="match status" value="1"/>
</dbReference>
<dbReference type="PROSITE" id="PS00729">
    <property type="entry name" value="AP_NUCLEASE_F2_1"/>
    <property type="match status" value="1"/>
</dbReference>
<dbReference type="PROSITE" id="PS00730">
    <property type="entry name" value="AP_NUCLEASE_F2_2"/>
    <property type="match status" value="1"/>
</dbReference>
<dbReference type="PROSITE" id="PS00731">
    <property type="entry name" value="AP_NUCLEASE_F2_3"/>
    <property type="match status" value="1"/>
</dbReference>
<dbReference type="PROSITE" id="PS51432">
    <property type="entry name" value="AP_NUCLEASE_F2_4"/>
    <property type="match status" value="1"/>
</dbReference>
<evidence type="ECO:0000255" key="1">
    <source>
        <dbReference type="HAMAP-Rule" id="MF_00152"/>
    </source>
</evidence>
<proteinExistence type="inferred from homology"/>
<protein>
    <recommendedName>
        <fullName evidence="1">Probable endonuclease 4</fullName>
        <ecNumber evidence="1">3.1.21.2</ecNumber>
    </recommendedName>
    <alternativeName>
        <fullName evidence="1">Endodeoxyribonuclease IV</fullName>
    </alternativeName>
    <alternativeName>
        <fullName evidence="1">Endonuclease IV</fullName>
    </alternativeName>
</protein>
<sequence length="285" mass="31443">MKYIGAHVSAAGGLANAAIRAAEIDATAFALFTKNQRQWRAAPLTTQTIDEFKAACEKYHYTSAQILPHDSYLINLGHPVAEALEKSRDAFIDEMQRCEQLGLSLLNFHPGSHLMQISEEDCLARIAESINIALDKTQGVTAVIENTAGQGSNLGFKFEHLAAIIDGVEDKSRVGVCIDTCHAFAAGYDLRTPAECEKTFADFARIVGFKYLHGMHLNDAKSTFGSRVDRHHSLGEGNIGHDAFRWIMQDDRFDGIPLILETINPDIWAEEIAWLKAQQTEKAVA</sequence>
<keyword id="KW-0227">DNA damage</keyword>
<keyword id="KW-0234">DNA repair</keyword>
<keyword id="KW-0255">Endonuclease</keyword>
<keyword id="KW-0378">Hydrolase</keyword>
<keyword id="KW-0479">Metal-binding</keyword>
<keyword id="KW-0540">Nuclease</keyword>
<keyword id="KW-0862">Zinc</keyword>
<comment type="function">
    <text evidence="1">Endonuclease IV plays a role in DNA repair. It cleaves phosphodiester bonds at apurinic or apyrimidinic (AP) sites, generating a 3'-hydroxyl group and a 5'-terminal sugar phosphate.</text>
</comment>
<comment type="catalytic activity">
    <reaction evidence="1">
        <text>Endonucleolytic cleavage to 5'-phosphooligonucleotide end-products.</text>
        <dbReference type="EC" id="3.1.21.2"/>
    </reaction>
</comment>
<comment type="cofactor">
    <cofactor evidence="1">
        <name>Zn(2+)</name>
        <dbReference type="ChEBI" id="CHEBI:29105"/>
    </cofactor>
    <text evidence="1">Binds 3 Zn(2+) ions.</text>
</comment>
<comment type="similarity">
    <text evidence="1">Belongs to the AP endonuclease 2 family.</text>
</comment>
<reference key="1">
    <citation type="journal article" date="2006" name="Proc. Natl. Acad. Sci. U.S.A.">
        <title>Identification of genes subject to positive selection in uropathogenic strains of Escherichia coli: a comparative genomics approach.</title>
        <authorList>
            <person name="Chen S.L."/>
            <person name="Hung C.-S."/>
            <person name="Xu J."/>
            <person name="Reigstad C.S."/>
            <person name="Magrini V."/>
            <person name="Sabo A."/>
            <person name="Blasiar D."/>
            <person name="Bieri T."/>
            <person name="Meyer R.R."/>
            <person name="Ozersky P."/>
            <person name="Armstrong J.R."/>
            <person name="Fulton R.S."/>
            <person name="Latreille J.P."/>
            <person name="Spieth J."/>
            <person name="Hooton T.M."/>
            <person name="Mardis E.R."/>
            <person name="Hultgren S.J."/>
            <person name="Gordon J.I."/>
        </authorList>
    </citation>
    <scope>NUCLEOTIDE SEQUENCE [LARGE SCALE GENOMIC DNA]</scope>
    <source>
        <strain>UTI89 / UPEC</strain>
    </source>
</reference>